<dbReference type="EC" id="2.3.1.225" evidence="11"/>
<dbReference type="EMBL" id="CU329671">
    <property type="protein sequence ID" value="CAA20305.1"/>
    <property type="molecule type" value="Genomic_DNA"/>
</dbReference>
<dbReference type="PIR" id="T40406">
    <property type="entry name" value="T40406"/>
</dbReference>
<dbReference type="RefSeq" id="NP_595766.1">
    <property type="nucleotide sequence ID" value="NM_001021667.2"/>
</dbReference>
<dbReference type="SMR" id="O74384"/>
<dbReference type="BioGRID" id="277573">
    <property type="interactions" value="46"/>
</dbReference>
<dbReference type="FunCoup" id="O74384">
    <property type="interactions" value="273"/>
</dbReference>
<dbReference type="STRING" id="284812.O74384"/>
<dbReference type="iPTMnet" id="O74384"/>
<dbReference type="PaxDb" id="4896-SPBC3H7.09.1"/>
<dbReference type="EnsemblFungi" id="SPBC3H7.09.1">
    <property type="protein sequence ID" value="SPBC3H7.09.1:pep"/>
    <property type="gene ID" value="SPBC3H7.09"/>
</dbReference>
<dbReference type="GeneID" id="2541058"/>
<dbReference type="KEGG" id="spo:2541058"/>
<dbReference type="PomBase" id="SPBC3H7.09">
    <property type="gene designation" value="erf2"/>
</dbReference>
<dbReference type="VEuPathDB" id="FungiDB:SPBC3H7.09"/>
<dbReference type="eggNOG" id="KOG1311">
    <property type="taxonomic scope" value="Eukaryota"/>
</dbReference>
<dbReference type="HOGENOM" id="CLU_792633_0_0_1"/>
<dbReference type="InParanoid" id="O74384"/>
<dbReference type="OMA" id="YVTMFLI"/>
<dbReference type="PhylomeDB" id="O74384"/>
<dbReference type="PRO" id="PR:O74384"/>
<dbReference type="Proteomes" id="UP000002485">
    <property type="component" value="Chromosome II"/>
</dbReference>
<dbReference type="GO" id="GO:0005783">
    <property type="term" value="C:endoplasmic reticulum"/>
    <property type="evidence" value="ECO:0000318"/>
    <property type="project" value="GO_Central"/>
</dbReference>
<dbReference type="GO" id="GO:0005789">
    <property type="term" value="C:endoplasmic reticulum membrane"/>
    <property type="evidence" value="ECO:0000266"/>
    <property type="project" value="PomBase"/>
</dbReference>
<dbReference type="GO" id="GO:0031211">
    <property type="term" value="C:endoplasmic reticulum palmitoyltransferase complex"/>
    <property type="evidence" value="ECO:0000266"/>
    <property type="project" value="PomBase"/>
</dbReference>
<dbReference type="GO" id="GO:0005794">
    <property type="term" value="C:Golgi apparatus"/>
    <property type="evidence" value="ECO:0000314"/>
    <property type="project" value="PomBase"/>
</dbReference>
<dbReference type="GO" id="GO:0032580">
    <property type="term" value="C:Golgi cisterna membrane"/>
    <property type="evidence" value="ECO:0007669"/>
    <property type="project" value="UniProtKB-SubCell"/>
</dbReference>
<dbReference type="GO" id="GO:0019706">
    <property type="term" value="F:protein-cysteine S-palmitoyltransferase activity"/>
    <property type="evidence" value="ECO:0000315"/>
    <property type="project" value="PomBase"/>
</dbReference>
<dbReference type="GO" id="GO:0006612">
    <property type="term" value="P:protein targeting to membrane"/>
    <property type="evidence" value="ECO:0000318"/>
    <property type="project" value="GO_Central"/>
</dbReference>
<dbReference type="GO" id="GO:0030435">
    <property type="term" value="P:sporulation resulting in formation of a cellular spore"/>
    <property type="evidence" value="ECO:0007669"/>
    <property type="project" value="UniProtKB-KW"/>
</dbReference>
<dbReference type="InterPro" id="IPR001594">
    <property type="entry name" value="Palmitoyltrfase_DHHC"/>
</dbReference>
<dbReference type="InterPro" id="IPR039859">
    <property type="entry name" value="PFA4/ZDH16/20/ERF2-like"/>
</dbReference>
<dbReference type="PANTHER" id="PTHR22883:SF43">
    <property type="entry name" value="PALMITOYLTRANSFERASE APP"/>
    <property type="match status" value="1"/>
</dbReference>
<dbReference type="PANTHER" id="PTHR22883">
    <property type="entry name" value="ZINC FINGER DHHC DOMAIN CONTAINING PROTEIN"/>
    <property type="match status" value="1"/>
</dbReference>
<dbReference type="Pfam" id="PF01529">
    <property type="entry name" value="DHHC"/>
    <property type="match status" value="1"/>
</dbReference>
<dbReference type="PROSITE" id="PS50216">
    <property type="entry name" value="DHHC"/>
    <property type="match status" value="1"/>
</dbReference>
<reference key="1">
    <citation type="journal article" date="2002" name="Nature">
        <title>The genome sequence of Schizosaccharomyces pombe.</title>
        <authorList>
            <person name="Wood V."/>
            <person name="Gwilliam R."/>
            <person name="Rajandream M.A."/>
            <person name="Lyne M.H."/>
            <person name="Lyne R."/>
            <person name="Stewart A."/>
            <person name="Sgouros J.G."/>
            <person name="Peat N."/>
            <person name="Hayles J."/>
            <person name="Baker S.G."/>
            <person name="Basham D."/>
            <person name="Bowman S."/>
            <person name="Brooks K."/>
            <person name="Brown D."/>
            <person name="Brown S."/>
            <person name="Chillingworth T."/>
            <person name="Churcher C.M."/>
            <person name="Collins M."/>
            <person name="Connor R."/>
            <person name="Cronin A."/>
            <person name="Davis P."/>
            <person name="Feltwell T."/>
            <person name="Fraser A."/>
            <person name="Gentles S."/>
            <person name="Goble A."/>
            <person name="Hamlin N."/>
            <person name="Harris D.E."/>
            <person name="Hidalgo J."/>
            <person name="Hodgson G."/>
            <person name="Holroyd S."/>
            <person name="Hornsby T."/>
            <person name="Howarth S."/>
            <person name="Huckle E.J."/>
            <person name="Hunt S."/>
            <person name="Jagels K."/>
            <person name="James K.D."/>
            <person name="Jones L."/>
            <person name="Jones M."/>
            <person name="Leather S."/>
            <person name="McDonald S."/>
            <person name="McLean J."/>
            <person name="Mooney P."/>
            <person name="Moule S."/>
            <person name="Mungall K.L."/>
            <person name="Murphy L.D."/>
            <person name="Niblett D."/>
            <person name="Odell C."/>
            <person name="Oliver K."/>
            <person name="O'Neil S."/>
            <person name="Pearson D."/>
            <person name="Quail M.A."/>
            <person name="Rabbinowitsch E."/>
            <person name="Rutherford K.M."/>
            <person name="Rutter S."/>
            <person name="Saunders D."/>
            <person name="Seeger K."/>
            <person name="Sharp S."/>
            <person name="Skelton J."/>
            <person name="Simmonds M.N."/>
            <person name="Squares R."/>
            <person name="Squares S."/>
            <person name="Stevens K."/>
            <person name="Taylor K."/>
            <person name="Taylor R.G."/>
            <person name="Tivey A."/>
            <person name="Walsh S.V."/>
            <person name="Warren T."/>
            <person name="Whitehead S."/>
            <person name="Woodward J.R."/>
            <person name="Volckaert G."/>
            <person name="Aert R."/>
            <person name="Robben J."/>
            <person name="Grymonprez B."/>
            <person name="Weltjens I."/>
            <person name="Vanstreels E."/>
            <person name="Rieger M."/>
            <person name="Schaefer M."/>
            <person name="Mueller-Auer S."/>
            <person name="Gabel C."/>
            <person name="Fuchs M."/>
            <person name="Duesterhoeft A."/>
            <person name="Fritzc C."/>
            <person name="Holzer E."/>
            <person name="Moestl D."/>
            <person name="Hilbert H."/>
            <person name="Borzym K."/>
            <person name="Langer I."/>
            <person name="Beck A."/>
            <person name="Lehrach H."/>
            <person name="Reinhardt R."/>
            <person name="Pohl T.M."/>
            <person name="Eger P."/>
            <person name="Zimmermann W."/>
            <person name="Wedler H."/>
            <person name="Wambutt R."/>
            <person name="Purnelle B."/>
            <person name="Goffeau A."/>
            <person name="Cadieu E."/>
            <person name="Dreano S."/>
            <person name="Gloux S."/>
            <person name="Lelaure V."/>
            <person name="Mottier S."/>
            <person name="Galibert F."/>
            <person name="Aves S.J."/>
            <person name="Xiang Z."/>
            <person name="Hunt C."/>
            <person name="Moore K."/>
            <person name="Hurst S.M."/>
            <person name="Lucas M."/>
            <person name="Rochet M."/>
            <person name="Gaillardin C."/>
            <person name="Tallada V.A."/>
            <person name="Garzon A."/>
            <person name="Thode G."/>
            <person name="Daga R.R."/>
            <person name="Cruzado L."/>
            <person name="Jimenez J."/>
            <person name="Sanchez M."/>
            <person name="del Rey F."/>
            <person name="Benito J."/>
            <person name="Dominguez A."/>
            <person name="Revuelta J.L."/>
            <person name="Moreno S."/>
            <person name="Armstrong J."/>
            <person name="Forsburg S.L."/>
            <person name="Cerutti L."/>
            <person name="Lowe T."/>
            <person name="McCombie W.R."/>
            <person name="Paulsen I."/>
            <person name="Potashkin J."/>
            <person name="Shpakovski G.V."/>
            <person name="Ussery D."/>
            <person name="Barrell B.G."/>
            <person name="Nurse P."/>
        </authorList>
    </citation>
    <scope>NUCLEOTIDE SEQUENCE [LARGE SCALE GENOMIC DNA]</scope>
    <source>
        <strain>972 / ATCC 24843</strain>
    </source>
</reference>
<reference key="2">
    <citation type="journal article" date="2005" name="Curr. Biol.">
        <title>A large-scale screen in S. pombe identifies seven novel genes required for critical meiotic events.</title>
        <authorList>
            <person name="Martin-Castellanos C."/>
            <person name="Blanco M."/>
            <person name="Rozalen A.E."/>
            <person name="Perez-Hidalgo L."/>
            <person name="Garcia A.I."/>
            <person name="Conde F."/>
            <person name="Mata J."/>
            <person name="Ellermeier C."/>
            <person name="Davis L."/>
            <person name="San-Segundo P."/>
            <person name="Smith G.R."/>
            <person name="Moreno S."/>
        </authorList>
    </citation>
    <scope>FUNCTION IN SPORULATION</scope>
</reference>
<reference key="3">
    <citation type="journal article" date="2006" name="Nat. Biotechnol.">
        <title>ORFeome cloning and global analysis of protein localization in the fission yeast Schizosaccharomyces pombe.</title>
        <authorList>
            <person name="Matsuyama A."/>
            <person name="Arai R."/>
            <person name="Yashiroda Y."/>
            <person name="Shirai A."/>
            <person name="Kamata A."/>
            <person name="Sekido S."/>
            <person name="Kobayashi Y."/>
            <person name="Hashimoto A."/>
            <person name="Hamamoto M."/>
            <person name="Hiraoka Y."/>
            <person name="Horinouchi S."/>
            <person name="Yoshida M."/>
        </authorList>
    </citation>
    <scope>SUBCELLULAR LOCATION [LARGE SCALE ANALYSIS]</scope>
</reference>
<reference key="4">
    <citation type="journal article" date="2013" name="PLoS Biol.">
        <title>Quantitative control of protein S-palmitoylation regulates meiotic entry in fission yeast.</title>
        <authorList>
            <person name="Zhang M.M."/>
            <person name="Wu P.Y."/>
            <person name="Kelly F.D."/>
            <person name="Nurse P."/>
            <person name="Hang H.C."/>
        </authorList>
    </citation>
    <scope>FUNCTION</scope>
    <scope>CATALYTIC ACTIVITY</scope>
    <scope>DEVELOPMENTAL STAGE</scope>
    <scope>DISRUPTION PHENOTYPE</scope>
    <scope>MUTAGENESIS OF CYS-212</scope>
</reference>
<keyword id="KW-0012">Acyltransferase</keyword>
<keyword id="KW-0256">Endoplasmic reticulum</keyword>
<keyword id="KW-0333">Golgi apparatus</keyword>
<keyword id="KW-0449">Lipoprotein</keyword>
<keyword id="KW-0472">Membrane</keyword>
<keyword id="KW-0564">Palmitate</keyword>
<keyword id="KW-1185">Reference proteome</keyword>
<keyword id="KW-0749">Sporulation</keyword>
<keyword id="KW-0808">Transferase</keyword>
<keyword id="KW-0812">Transmembrane</keyword>
<keyword id="KW-1133">Transmembrane helix</keyword>
<comment type="function">
    <text evidence="6 8">The erf2-erf4 complex is a palmitoyltransferase with a major role in driving sexual development (PubMed:16303567, PubMed:23843742). Palmitoylates ras1 (PubMed:23843742). Palmitoylates isp3 (PubMed:23843742). Palmitoylates rho3 (PubMed:23843742).</text>
</comment>
<comment type="catalytic activity">
    <reaction evidence="11">
        <text>L-cysteinyl-[protein] + hexadecanoyl-CoA = S-hexadecanoyl-L-cysteinyl-[protein] + CoA</text>
        <dbReference type="Rhea" id="RHEA:36683"/>
        <dbReference type="Rhea" id="RHEA-COMP:10131"/>
        <dbReference type="Rhea" id="RHEA-COMP:11032"/>
        <dbReference type="ChEBI" id="CHEBI:29950"/>
        <dbReference type="ChEBI" id="CHEBI:57287"/>
        <dbReference type="ChEBI" id="CHEBI:57379"/>
        <dbReference type="ChEBI" id="CHEBI:74151"/>
        <dbReference type="EC" id="2.3.1.225"/>
    </reaction>
</comment>
<comment type="subunit">
    <text evidence="1">Interacts with erf4.</text>
</comment>
<comment type="subcellular location">
    <subcellularLocation>
        <location evidence="1">Endoplasmic reticulum membrane</location>
        <topology evidence="1">Multi-pass membrane protein</topology>
    </subcellularLocation>
    <subcellularLocation>
        <location evidence="7">Golgi apparatus</location>
        <location evidence="7">Golgi stack membrane</location>
        <topology evidence="7">Multi-pass membrane protein</topology>
    </subcellularLocation>
</comment>
<comment type="developmental stage">
    <text evidence="8">Highly expressed during meiosis and sporulation (at protein level).</text>
</comment>
<comment type="domain">
    <text evidence="1">The DHHC domain is required for palmitoyltransferase activity.</text>
</comment>
<comment type="PTM">
    <text evidence="3">Autopalmitoylated.</text>
</comment>
<comment type="disruption phenotype">
    <text evidence="8">Abolishes palmitoylation of ras1 during vegetative growth (PubMed:23843742). Delays mitotic entry (PubMed:23843742).</text>
</comment>
<comment type="similarity">
    <text evidence="10">Belongs to the DHHC palmitoyltransferase family. ERF2/ZDHHC9 subfamily.</text>
</comment>
<feature type="chain" id="PRO_0000212946" description="Palmitoyltransferase erf2">
    <location>
        <begin position="1"/>
        <end position="350"/>
    </location>
</feature>
<feature type="topological domain" description="Cytoplasmic" evidence="4">
    <location>
        <begin position="1"/>
        <end position="86"/>
    </location>
</feature>
<feature type="transmembrane region" description="Helical" evidence="4">
    <location>
        <begin position="87"/>
        <end position="107"/>
    </location>
</feature>
<feature type="topological domain" description="Lumenal" evidence="4">
    <location>
        <begin position="108"/>
        <end position="112"/>
    </location>
</feature>
<feature type="transmembrane region" description="Helical" evidence="4">
    <location>
        <begin position="113"/>
        <end position="133"/>
    </location>
</feature>
<feature type="topological domain" description="Cytoplasmic" evidence="4">
    <location>
        <begin position="134"/>
        <end position="225"/>
    </location>
</feature>
<feature type="transmembrane region" description="Helical" evidence="4">
    <location>
        <begin position="226"/>
        <end position="246"/>
    </location>
</feature>
<feature type="topological domain" description="Lumenal" evidence="4">
    <location>
        <begin position="247"/>
        <end position="270"/>
    </location>
</feature>
<feature type="transmembrane region" description="Helical" evidence="4">
    <location>
        <begin position="271"/>
        <end position="291"/>
    </location>
</feature>
<feature type="topological domain" description="Cytoplasmic" evidence="4">
    <location>
        <begin position="292"/>
        <end position="350"/>
    </location>
</feature>
<feature type="domain" description="DHHC" evidence="5">
    <location>
        <begin position="182"/>
        <end position="232"/>
    </location>
</feature>
<feature type="active site" description="S-palmitoyl cysteine intermediate" evidence="2">
    <location>
        <position position="212"/>
    </location>
</feature>
<feature type="mutagenesis site" description="Abolishes palmitoylation of ras1 during sporulation." evidence="8">
    <original>C</original>
    <variation>A</variation>
    <location>
        <position position="212"/>
    </location>
</feature>
<name>ERFB_SCHPO</name>
<evidence type="ECO:0000250" key="1">
    <source>
        <dbReference type="UniProtKB" id="Q06551"/>
    </source>
</evidence>
<evidence type="ECO:0000250" key="2">
    <source>
        <dbReference type="UniProtKB" id="Q8VDZ4"/>
    </source>
</evidence>
<evidence type="ECO:0000250" key="3">
    <source>
        <dbReference type="UniProtKB" id="Q9UIJ5"/>
    </source>
</evidence>
<evidence type="ECO:0000255" key="4"/>
<evidence type="ECO:0000255" key="5">
    <source>
        <dbReference type="PROSITE-ProRule" id="PRU00067"/>
    </source>
</evidence>
<evidence type="ECO:0000269" key="6">
    <source>
    </source>
</evidence>
<evidence type="ECO:0000269" key="7">
    <source>
    </source>
</evidence>
<evidence type="ECO:0000269" key="8">
    <source>
    </source>
</evidence>
<evidence type="ECO:0000303" key="9">
    <source>
    </source>
</evidence>
<evidence type="ECO:0000305" key="10"/>
<evidence type="ECO:0000305" key="11">
    <source>
    </source>
</evidence>
<evidence type="ECO:0000312" key="12">
    <source>
        <dbReference type="PomBase" id="SPBC3H7.09"/>
    </source>
</evidence>
<gene>
    <name evidence="9" type="primary">erf2</name>
    <name type="synonym">mug142</name>
    <name evidence="12" type="ORF">SPBC3H7.09</name>
</gene>
<proteinExistence type="evidence at protein level"/>
<accession>O74384</accession>
<protein>
    <recommendedName>
        <fullName>Palmitoyltransferase erf2</fullName>
        <ecNumber evidence="11">2.3.1.225</ecNumber>
    </recommendedName>
    <alternativeName>
        <fullName>DHHC cysteine-rich domain-containing protein erf2</fullName>
    </alternativeName>
    <alternativeName>
        <fullName>Meiotically up-regulated gene 142 protein</fullName>
    </alternativeName>
    <alternativeName>
        <fullName>Ras protein acyltransferase</fullName>
    </alternativeName>
</protein>
<organism>
    <name type="scientific">Schizosaccharomyces pombe (strain 972 / ATCC 24843)</name>
    <name type="common">Fission yeast</name>
    <dbReference type="NCBI Taxonomy" id="284812"/>
    <lineage>
        <taxon>Eukaryota</taxon>
        <taxon>Fungi</taxon>
        <taxon>Dikarya</taxon>
        <taxon>Ascomycota</taxon>
        <taxon>Taphrinomycotina</taxon>
        <taxon>Schizosaccharomycetes</taxon>
        <taxon>Schizosaccharomycetales</taxon>
        <taxon>Schizosaccharomycetaceae</taxon>
        <taxon>Schizosaccharomyces</taxon>
    </lineage>
</organism>
<sequence length="350" mass="40294">MSYEKHSDAKASRYAWNQPWNPFEVTLSDPTYPMNLEEKNQIPYRFQSVPDDVPEVPHIESRYKNLPGNNIYLCCGRLQMSSQYKAFLISLFALILPGVLFFIFSAFWLWHHVSPAVPITFAYLYALAVVSMFKCSTADPGILPRNAYSLTYNPAHPWSVIPEDRKVLVGSTRSDSVFVNTVYCHTCHLYRPPRASHCHLCDNCVEYLDHHCIWLNTCIGRRNYRYYFIFLLSVVLSALYLTGLGFYTSIGSFHESTDTNFAAHLRRPWAGVSFFLGIYGALGAILPGILFCYQCYLISVGQNVHEYLRAKSTETEDVHPFHDSIWLNFLVVLCRPKNVSYVRPTRKSYV</sequence>